<comment type="function">
    <text evidence="1">Located at the top of the head of the 30S subunit, it contacts several helices of the 16S rRNA. In the 70S ribosome it contacts the 23S rRNA (bridge B1a) and protein L5 of the 50S subunit (bridge B1b), connecting the 2 subunits; these bridges are implicated in subunit movement.</text>
</comment>
<comment type="subunit">
    <text evidence="1">Part of the 30S ribosomal subunit. Forms a loose heterodimer with protein S19. Forms two bridges to the 50S subunit in the 70S ribosome.</text>
</comment>
<comment type="similarity">
    <text evidence="1">Belongs to the universal ribosomal protein uS13 family.</text>
</comment>
<name>RS13_METAR</name>
<dbReference type="EMBL" id="AM114193">
    <property type="protein sequence ID" value="CAJ37637.1"/>
    <property type="molecule type" value="Genomic_DNA"/>
</dbReference>
<dbReference type="SMR" id="Q0W1V6"/>
<dbReference type="STRING" id="351160.RCIX2580"/>
<dbReference type="KEGG" id="rci:RCIX2580"/>
<dbReference type="PATRIC" id="fig|351160.9.peg.646"/>
<dbReference type="eggNOG" id="arCOG01722">
    <property type="taxonomic scope" value="Archaea"/>
</dbReference>
<dbReference type="OrthoDB" id="372127at2157"/>
<dbReference type="Proteomes" id="UP000000663">
    <property type="component" value="Chromosome"/>
</dbReference>
<dbReference type="GO" id="GO:0005829">
    <property type="term" value="C:cytosol"/>
    <property type="evidence" value="ECO:0007669"/>
    <property type="project" value="TreeGrafter"/>
</dbReference>
<dbReference type="GO" id="GO:0015935">
    <property type="term" value="C:small ribosomal subunit"/>
    <property type="evidence" value="ECO:0007669"/>
    <property type="project" value="TreeGrafter"/>
</dbReference>
<dbReference type="GO" id="GO:0019843">
    <property type="term" value="F:rRNA binding"/>
    <property type="evidence" value="ECO:0007669"/>
    <property type="project" value="UniProtKB-UniRule"/>
</dbReference>
<dbReference type="GO" id="GO:0003735">
    <property type="term" value="F:structural constituent of ribosome"/>
    <property type="evidence" value="ECO:0007669"/>
    <property type="project" value="InterPro"/>
</dbReference>
<dbReference type="GO" id="GO:0006412">
    <property type="term" value="P:translation"/>
    <property type="evidence" value="ECO:0007669"/>
    <property type="project" value="UniProtKB-UniRule"/>
</dbReference>
<dbReference type="FunFam" id="1.10.8.50:FF:000001">
    <property type="entry name" value="30S ribosomal protein S13"/>
    <property type="match status" value="1"/>
</dbReference>
<dbReference type="FunFam" id="4.10.910.10:FF:000002">
    <property type="entry name" value="40S ribosomal protein S18"/>
    <property type="match status" value="1"/>
</dbReference>
<dbReference type="Gene3D" id="1.10.8.50">
    <property type="match status" value="1"/>
</dbReference>
<dbReference type="Gene3D" id="4.10.910.10">
    <property type="entry name" value="30s ribosomal protein s13, domain 2"/>
    <property type="match status" value="1"/>
</dbReference>
<dbReference type="HAMAP" id="MF_01315">
    <property type="entry name" value="Ribosomal_uS13"/>
    <property type="match status" value="1"/>
</dbReference>
<dbReference type="InterPro" id="IPR027437">
    <property type="entry name" value="Rbsml_uS13_C"/>
</dbReference>
<dbReference type="InterPro" id="IPR001892">
    <property type="entry name" value="Ribosomal_uS13"/>
</dbReference>
<dbReference type="InterPro" id="IPR010979">
    <property type="entry name" value="Ribosomal_uS13-like_H2TH"/>
</dbReference>
<dbReference type="InterPro" id="IPR019977">
    <property type="entry name" value="Ribosomal_uS13_archaeal"/>
</dbReference>
<dbReference type="InterPro" id="IPR018269">
    <property type="entry name" value="Ribosomal_uS13_CS"/>
</dbReference>
<dbReference type="NCBIfam" id="NF003140">
    <property type="entry name" value="PRK04053.1"/>
    <property type="match status" value="1"/>
</dbReference>
<dbReference type="NCBIfam" id="TIGR03629">
    <property type="entry name" value="uS13_arch"/>
    <property type="match status" value="1"/>
</dbReference>
<dbReference type="PANTHER" id="PTHR10871">
    <property type="entry name" value="30S RIBOSOMAL PROTEIN S13/40S RIBOSOMAL PROTEIN S18"/>
    <property type="match status" value="1"/>
</dbReference>
<dbReference type="PANTHER" id="PTHR10871:SF3">
    <property type="entry name" value="SMALL RIBOSOMAL SUBUNIT PROTEIN US13"/>
    <property type="match status" value="1"/>
</dbReference>
<dbReference type="Pfam" id="PF00416">
    <property type="entry name" value="Ribosomal_S13"/>
    <property type="match status" value="1"/>
</dbReference>
<dbReference type="SUPFAM" id="SSF46946">
    <property type="entry name" value="S13-like H2TH domain"/>
    <property type="match status" value="1"/>
</dbReference>
<dbReference type="PROSITE" id="PS00646">
    <property type="entry name" value="RIBOSOMAL_S13_1"/>
    <property type="match status" value="1"/>
</dbReference>
<dbReference type="PROSITE" id="PS50159">
    <property type="entry name" value="RIBOSOMAL_S13_2"/>
    <property type="match status" value="1"/>
</dbReference>
<proteinExistence type="inferred from homology"/>
<keyword id="KW-1185">Reference proteome</keyword>
<keyword id="KW-0687">Ribonucleoprotein</keyword>
<keyword id="KW-0689">Ribosomal protein</keyword>
<keyword id="KW-0694">RNA-binding</keyword>
<keyword id="KW-0699">rRNA-binding</keyword>
<gene>
    <name evidence="1" type="primary">rps13</name>
    <name type="ordered locus">UNCMA_06190</name>
    <name type="ORF">RCIX2580</name>
</gene>
<organism>
    <name type="scientific">Methanocella arvoryzae (strain DSM 22066 / NBRC 105507 / MRE50)</name>
    <dbReference type="NCBI Taxonomy" id="351160"/>
    <lineage>
        <taxon>Archaea</taxon>
        <taxon>Methanobacteriati</taxon>
        <taxon>Methanobacteriota</taxon>
        <taxon>Stenosarchaea group</taxon>
        <taxon>Methanomicrobia</taxon>
        <taxon>Methanocellales</taxon>
        <taxon>Methanocellaceae</taxon>
        <taxon>Methanocella</taxon>
    </lineage>
</organism>
<reference key="1">
    <citation type="journal article" date="2006" name="Science">
        <title>Genome of rice cluster I archaea -- the key methane producers in the rice rhizosphere.</title>
        <authorList>
            <person name="Erkel C."/>
            <person name="Kube M."/>
            <person name="Reinhardt R."/>
            <person name="Liesack W."/>
        </authorList>
    </citation>
    <scope>NUCLEOTIDE SEQUENCE [LARGE SCALE GENOMIC DNA]</scope>
    <source>
        <strain>DSM 22066 / NBRC 105507 / MRE50</strain>
    </source>
</reference>
<evidence type="ECO:0000255" key="1">
    <source>
        <dbReference type="HAMAP-Rule" id="MF_01315"/>
    </source>
</evidence>
<evidence type="ECO:0000256" key="2">
    <source>
        <dbReference type="SAM" id="MobiDB-lite"/>
    </source>
</evidence>
<evidence type="ECO:0000305" key="3"/>
<feature type="chain" id="PRO_0000306768" description="Small ribosomal subunit protein uS13">
    <location>
        <begin position="1"/>
        <end position="224"/>
    </location>
</feature>
<feature type="region of interest" description="Disordered" evidence="2">
    <location>
        <begin position="1"/>
        <end position="64"/>
    </location>
</feature>
<feature type="region of interest" description="Disordered" evidence="2">
    <location>
        <begin position="184"/>
        <end position="224"/>
    </location>
</feature>
<feature type="compositionally biased region" description="Basic and acidic residues" evidence="2">
    <location>
        <begin position="1"/>
        <end position="17"/>
    </location>
</feature>
<feature type="compositionally biased region" description="Low complexity" evidence="2">
    <location>
        <begin position="20"/>
        <end position="30"/>
    </location>
</feature>
<feature type="compositionally biased region" description="Low complexity" evidence="2">
    <location>
        <begin position="38"/>
        <end position="47"/>
    </location>
</feature>
<feature type="compositionally biased region" description="Basic and acidic residues" evidence="2">
    <location>
        <begin position="210"/>
        <end position="224"/>
    </location>
</feature>
<protein>
    <recommendedName>
        <fullName evidence="1">Small ribosomal subunit protein uS13</fullName>
    </recommendedName>
    <alternativeName>
        <fullName evidence="3">30S ribosomal protein S13</fullName>
    </alternativeName>
</protein>
<sequence length="224" mass="24529">MSEKTDKTEKKQKKAEETVETASAEAAPAKKGGKKQAAKPAEGAPADEAARKGGKGKKPAAEEKPKDEIKYIVRIANTDLDGTQTVEFALTGIKGIGNRISKIIARQAQVDPHATMGYLPPEQVDKLRAVIDNLEANVPVWMLNRRRDIYTGEDKHLYGVDLTMAVKEDINIMKKIRSYKGIRHERGQKVRGQRTKSTGRTGATVGVVRKKGEQGGAAKKEDKK</sequence>
<accession>Q0W1V6</accession>